<sequence length="451" mass="48876">MKDEQLYYFEKSPVFKAMMHFSLPMMIGTLLSVIYGILNIYFIGFLEDSHMISAISLTLPVFAILMGLGNLFGVGAGTYISRLLGAKDYSKSKFVSSFSIYGGIALGLIVILVTLPFSDQIAAILGARGETLALTSNYLKVMFLSAPFVILFFILEQFARAIGAPMISMIGMLASVGLNIILDPILIFGFDLNVVGAALGTAISNVAAALFFIVYFMKNSDVVSVNIKLAKPNKEMLSEIFKIGIPAFLMSILMGFTGLVLNLFLAHYGNFAIASYGISFRLVQFPELIIMGLCEGVVPLIAYNFMANKGRMKDVIKAVIMSIGVIFVVCMIAVFTIGHHMVGLFTTDQDIVEMATFILKVTMTSLLLNGIGFLFTGMLQATGQGRGATIMAILQGAIIIPVLFIMNALFGLTGVIWSLLIAESLCALAAMLIVYLLRDRLTVDTSELIEG</sequence>
<organism>
    <name type="scientific">Staphylococcus aureus (strain MW2)</name>
    <dbReference type="NCBI Taxonomy" id="196620"/>
    <lineage>
        <taxon>Bacteria</taxon>
        <taxon>Bacillati</taxon>
        <taxon>Bacillota</taxon>
        <taxon>Bacilli</taxon>
        <taxon>Bacillales</taxon>
        <taxon>Staphylococcaceae</taxon>
        <taxon>Staphylococcus</taxon>
    </lineage>
</organism>
<protein>
    <recommendedName>
        <fullName>Multidrug export protein MepA</fullName>
    </recommendedName>
</protein>
<feature type="chain" id="PRO_0000290232" description="Multidrug export protein MepA">
    <location>
        <begin position="1"/>
        <end position="451"/>
    </location>
</feature>
<feature type="transmembrane region" description="Helical" evidence="2">
    <location>
        <begin position="26"/>
        <end position="46"/>
    </location>
</feature>
<feature type="transmembrane region" description="Helical" evidence="2">
    <location>
        <begin position="54"/>
        <end position="74"/>
    </location>
</feature>
<feature type="transmembrane region" description="Helical" evidence="2">
    <location>
        <begin position="97"/>
        <end position="117"/>
    </location>
</feature>
<feature type="transmembrane region" description="Helical" evidence="2">
    <location>
        <begin position="139"/>
        <end position="159"/>
    </location>
</feature>
<feature type="transmembrane region" description="Helical" evidence="2">
    <location>
        <begin position="170"/>
        <end position="190"/>
    </location>
</feature>
<feature type="transmembrane region" description="Helical" evidence="2">
    <location>
        <begin position="194"/>
        <end position="214"/>
    </location>
</feature>
<feature type="transmembrane region" description="Helical" evidence="2">
    <location>
        <begin position="245"/>
        <end position="265"/>
    </location>
</feature>
<feature type="transmembrane region" description="Helical" evidence="2">
    <location>
        <begin position="282"/>
        <end position="302"/>
    </location>
</feature>
<feature type="transmembrane region" description="Helical" evidence="2">
    <location>
        <begin position="318"/>
        <end position="338"/>
    </location>
</feature>
<feature type="transmembrane region" description="Helical" evidence="2">
    <location>
        <begin position="355"/>
        <end position="375"/>
    </location>
</feature>
<feature type="transmembrane region" description="Helical" evidence="2">
    <location>
        <begin position="397"/>
        <end position="417"/>
    </location>
</feature>
<feature type="transmembrane region" description="Helical" evidence="2">
    <location>
        <begin position="418"/>
        <end position="438"/>
    </location>
</feature>
<comment type="function">
    <text evidence="1">Multidrug resistance efflux protein.</text>
</comment>
<comment type="subcellular location">
    <subcellularLocation>
        <location evidence="3">Cell membrane</location>
        <topology evidence="3">Multi-pass membrane protein</topology>
    </subcellularLocation>
</comment>
<comment type="similarity">
    <text evidence="3">Belongs to the multi antimicrobial extrusion (MATE) (TC 2.A.66.1) family. MepA subfamily.</text>
</comment>
<name>MEPA_STAAW</name>
<keyword id="KW-0046">Antibiotic resistance</keyword>
<keyword id="KW-1003">Cell membrane</keyword>
<keyword id="KW-0472">Membrane</keyword>
<keyword id="KW-0812">Transmembrane</keyword>
<keyword id="KW-1133">Transmembrane helix</keyword>
<keyword id="KW-0813">Transport</keyword>
<evidence type="ECO:0000250" key="1"/>
<evidence type="ECO:0000255" key="2"/>
<evidence type="ECO:0000305" key="3"/>
<gene>
    <name type="primary">mepA</name>
    <name type="ordered locus">MW0311</name>
</gene>
<accession>Q8NYB0</accession>
<dbReference type="EMBL" id="BA000033">
    <property type="protein sequence ID" value="BAB94176.1"/>
    <property type="molecule type" value="Genomic_DNA"/>
</dbReference>
<dbReference type="RefSeq" id="WP_000651054.1">
    <property type="nucleotide sequence ID" value="NC_003923.1"/>
</dbReference>
<dbReference type="SMR" id="Q8NYB0"/>
<dbReference type="KEGG" id="sam:MW0311"/>
<dbReference type="HOGENOM" id="CLU_012893_0_1_9"/>
<dbReference type="GO" id="GO:0005886">
    <property type="term" value="C:plasma membrane"/>
    <property type="evidence" value="ECO:0007669"/>
    <property type="project" value="UniProtKB-SubCell"/>
</dbReference>
<dbReference type="GO" id="GO:0015297">
    <property type="term" value="F:antiporter activity"/>
    <property type="evidence" value="ECO:0007669"/>
    <property type="project" value="InterPro"/>
</dbReference>
<dbReference type="GO" id="GO:0042910">
    <property type="term" value="F:xenobiotic transmembrane transporter activity"/>
    <property type="evidence" value="ECO:0007669"/>
    <property type="project" value="InterPro"/>
</dbReference>
<dbReference type="GO" id="GO:0046677">
    <property type="term" value="P:response to antibiotic"/>
    <property type="evidence" value="ECO:0007669"/>
    <property type="project" value="UniProtKB-KW"/>
</dbReference>
<dbReference type="CDD" id="cd13143">
    <property type="entry name" value="MATE_MepA_like"/>
    <property type="match status" value="1"/>
</dbReference>
<dbReference type="InterPro" id="IPR002528">
    <property type="entry name" value="MATE_fam"/>
</dbReference>
<dbReference type="InterPro" id="IPR045070">
    <property type="entry name" value="MATE_MepA-like"/>
</dbReference>
<dbReference type="InterPro" id="IPR051327">
    <property type="entry name" value="MATE_MepA_subfamily"/>
</dbReference>
<dbReference type="InterPro" id="IPR048279">
    <property type="entry name" value="MdtK-like"/>
</dbReference>
<dbReference type="NCBIfam" id="TIGR00797">
    <property type="entry name" value="matE"/>
    <property type="match status" value="1"/>
</dbReference>
<dbReference type="NCBIfam" id="NF000131">
    <property type="entry name" value="MATE_multi_MepA"/>
    <property type="match status" value="1"/>
</dbReference>
<dbReference type="PANTHER" id="PTHR43823:SF3">
    <property type="entry name" value="MULTIDRUG EXPORT PROTEIN MEPA"/>
    <property type="match status" value="1"/>
</dbReference>
<dbReference type="PANTHER" id="PTHR43823">
    <property type="entry name" value="SPORULATION PROTEIN YKVU"/>
    <property type="match status" value="1"/>
</dbReference>
<dbReference type="Pfam" id="PF01554">
    <property type="entry name" value="MatE"/>
    <property type="match status" value="2"/>
</dbReference>
<dbReference type="PIRSF" id="PIRSF006603">
    <property type="entry name" value="DinF"/>
    <property type="match status" value="1"/>
</dbReference>
<proteinExistence type="inferred from homology"/>
<reference key="1">
    <citation type="journal article" date="2002" name="Lancet">
        <title>Genome and virulence determinants of high virulence community-acquired MRSA.</title>
        <authorList>
            <person name="Baba T."/>
            <person name="Takeuchi F."/>
            <person name="Kuroda M."/>
            <person name="Yuzawa H."/>
            <person name="Aoki K."/>
            <person name="Oguchi A."/>
            <person name="Nagai Y."/>
            <person name="Iwama N."/>
            <person name="Asano K."/>
            <person name="Naimi T."/>
            <person name="Kuroda H."/>
            <person name="Cui L."/>
            <person name="Yamamoto K."/>
            <person name="Hiramatsu K."/>
        </authorList>
    </citation>
    <scope>NUCLEOTIDE SEQUENCE [LARGE SCALE GENOMIC DNA]</scope>
    <source>
        <strain>MW2</strain>
    </source>
</reference>